<sequence>MIIPALDLIEGQVVRLYQGDYGQVTEYKVDPAEQFNLYHQAGAGWLHLVDLTGAKNTAARQLNLIARLLASTPANIQIGGGVRSEQDVVDLLEAGAQRVVVGSTAVKQPQLVKSWIEKYGAEKIVLALDINIDEQGTRKVAISGWQEDSGVTIEALIDDYLTVGLQHVLCTDISRDGTLAGSNVELYRDLCRQYPQVQFQSSGGIGSLADIEALKGTGVAGVIVGRALLDGKFTAQEAFACWQNG</sequence>
<organism>
    <name type="scientific">Vibrio cholerae serotype O1 (strain ATCC 39315 / El Tor Inaba N16961)</name>
    <dbReference type="NCBI Taxonomy" id="243277"/>
    <lineage>
        <taxon>Bacteria</taxon>
        <taxon>Pseudomonadati</taxon>
        <taxon>Pseudomonadota</taxon>
        <taxon>Gammaproteobacteria</taxon>
        <taxon>Vibrionales</taxon>
        <taxon>Vibrionaceae</taxon>
        <taxon>Vibrio</taxon>
    </lineage>
</organism>
<evidence type="ECO:0000250" key="1"/>
<evidence type="ECO:0000305" key="2"/>
<accession>Q9KSW9</accession>
<gene>
    <name type="primary">hisA</name>
    <name type="ordered locus">VC_1137</name>
</gene>
<proteinExistence type="inferred from homology"/>
<comment type="catalytic activity">
    <reaction>
        <text>1-(5-phospho-beta-D-ribosyl)-5-[(5-phospho-beta-D-ribosylamino)methylideneamino]imidazole-4-carboxamide = 5-[(5-phospho-1-deoxy-D-ribulos-1-ylimino)methylamino]-1-(5-phospho-beta-D-ribosyl)imidazole-4-carboxamide</text>
        <dbReference type="Rhea" id="RHEA:15469"/>
        <dbReference type="ChEBI" id="CHEBI:58435"/>
        <dbReference type="ChEBI" id="CHEBI:58525"/>
        <dbReference type="EC" id="5.3.1.16"/>
    </reaction>
</comment>
<comment type="pathway">
    <text>Amino-acid biosynthesis; L-histidine biosynthesis; L-histidine from 5-phospho-alpha-D-ribose 1-diphosphate: step 4/9.</text>
</comment>
<comment type="subcellular location">
    <subcellularLocation>
        <location evidence="1">Cytoplasm</location>
    </subcellularLocation>
</comment>
<comment type="similarity">
    <text evidence="2">Belongs to the HisA/HisF family.</text>
</comment>
<reference key="1">
    <citation type="journal article" date="2000" name="Nature">
        <title>DNA sequence of both chromosomes of the cholera pathogen Vibrio cholerae.</title>
        <authorList>
            <person name="Heidelberg J.F."/>
            <person name="Eisen J.A."/>
            <person name="Nelson W.C."/>
            <person name="Clayton R.A."/>
            <person name="Gwinn M.L."/>
            <person name="Dodson R.J."/>
            <person name="Haft D.H."/>
            <person name="Hickey E.K."/>
            <person name="Peterson J.D."/>
            <person name="Umayam L.A."/>
            <person name="Gill S.R."/>
            <person name="Nelson K.E."/>
            <person name="Read T.D."/>
            <person name="Tettelin H."/>
            <person name="Richardson D.L."/>
            <person name="Ermolaeva M.D."/>
            <person name="Vamathevan J.J."/>
            <person name="Bass S."/>
            <person name="Qin H."/>
            <person name="Dragoi I."/>
            <person name="Sellers P."/>
            <person name="McDonald L.A."/>
            <person name="Utterback T.R."/>
            <person name="Fleischmann R.D."/>
            <person name="Nierman W.C."/>
            <person name="White O."/>
            <person name="Salzberg S.L."/>
            <person name="Smith H.O."/>
            <person name="Colwell R.R."/>
            <person name="Mekalanos J.J."/>
            <person name="Venter J.C."/>
            <person name="Fraser C.M."/>
        </authorList>
    </citation>
    <scope>NUCLEOTIDE SEQUENCE [LARGE SCALE GENOMIC DNA]</scope>
    <source>
        <strain>ATCC 39315 / El Tor Inaba N16961</strain>
    </source>
</reference>
<name>HIS4_VIBCH</name>
<protein>
    <recommendedName>
        <fullName>1-(5-phosphoribosyl)-5-[(5-phosphoribosylamino)methylideneamino] imidazole-4-carboxamide isomerase</fullName>
        <ecNumber>5.3.1.16</ecNumber>
    </recommendedName>
    <alternativeName>
        <fullName>Phosphoribosylformimino-5-aminoimidazole carboxamide ribotide isomerase</fullName>
    </alternativeName>
</protein>
<keyword id="KW-0028">Amino-acid biosynthesis</keyword>
<keyword id="KW-0963">Cytoplasm</keyword>
<keyword id="KW-0368">Histidine biosynthesis</keyword>
<keyword id="KW-0413">Isomerase</keyword>
<keyword id="KW-1185">Reference proteome</keyword>
<feature type="chain" id="PRO_0000142071" description="1-(5-phosphoribosyl)-5-[(5-phosphoribosylamino)methylideneamino] imidazole-4-carboxamide isomerase">
    <location>
        <begin position="1"/>
        <end position="245"/>
    </location>
</feature>
<feature type="active site" description="Proton acceptor" evidence="1">
    <location>
        <position position="7"/>
    </location>
</feature>
<feature type="active site" description="Proton donor" evidence="1">
    <location>
        <position position="129"/>
    </location>
</feature>
<dbReference type="EC" id="5.3.1.16"/>
<dbReference type="EMBL" id="AE003852">
    <property type="protein sequence ID" value="AAF94296.1"/>
    <property type="molecule type" value="Genomic_DNA"/>
</dbReference>
<dbReference type="PIR" id="D82238">
    <property type="entry name" value="D82238"/>
</dbReference>
<dbReference type="RefSeq" id="NP_230782.1">
    <property type="nucleotide sequence ID" value="NC_002505.1"/>
</dbReference>
<dbReference type="RefSeq" id="WP_000586511.1">
    <property type="nucleotide sequence ID" value="NZ_LT906614.1"/>
</dbReference>
<dbReference type="SMR" id="Q9KSW9"/>
<dbReference type="STRING" id="243277.VC_1137"/>
<dbReference type="DNASU" id="2614407"/>
<dbReference type="EnsemblBacteria" id="AAF94296">
    <property type="protein sequence ID" value="AAF94296"/>
    <property type="gene ID" value="VC_1137"/>
</dbReference>
<dbReference type="KEGG" id="vch:VC_1137"/>
<dbReference type="PATRIC" id="fig|243277.26.peg.1086"/>
<dbReference type="eggNOG" id="COG0106">
    <property type="taxonomic scope" value="Bacteria"/>
</dbReference>
<dbReference type="HOGENOM" id="CLU_048577_1_2_6"/>
<dbReference type="UniPathway" id="UPA00031">
    <property type="reaction ID" value="UER00009"/>
</dbReference>
<dbReference type="Proteomes" id="UP000000584">
    <property type="component" value="Chromosome 1"/>
</dbReference>
<dbReference type="GO" id="GO:0005737">
    <property type="term" value="C:cytoplasm"/>
    <property type="evidence" value="ECO:0000318"/>
    <property type="project" value="GO_Central"/>
</dbReference>
<dbReference type="GO" id="GO:0003949">
    <property type="term" value="F:1-(5-phosphoribosyl)-5-[(5-phosphoribosylamino)methylideneamino]imidazole-4-carboxamide isomerase activity"/>
    <property type="evidence" value="ECO:0000318"/>
    <property type="project" value="GO_Central"/>
</dbReference>
<dbReference type="GO" id="GO:0000105">
    <property type="term" value="P:L-histidine biosynthetic process"/>
    <property type="evidence" value="ECO:0000318"/>
    <property type="project" value="GO_Central"/>
</dbReference>
<dbReference type="CDD" id="cd04732">
    <property type="entry name" value="HisA"/>
    <property type="match status" value="1"/>
</dbReference>
<dbReference type="FunFam" id="3.20.20.70:FF:000009">
    <property type="entry name" value="1-(5-phosphoribosyl)-5-[(5-phosphoribosylamino)methylideneamino] imidazole-4-carboxamide isomerase"/>
    <property type="match status" value="1"/>
</dbReference>
<dbReference type="Gene3D" id="3.20.20.70">
    <property type="entry name" value="Aldolase class I"/>
    <property type="match status" value="1"/>
</dbReference>
<dbReference type="HAMAP" id="MF_01014">
    <property type="entry name" value="HisA"/>
    <property type="match status" value="1"/>
</dbReference>
<dbReference type="InterPro" id="IPR013785">
    <property type="entry name" value="Aldolase_TIM"/>
</dbReference>
<dbReference type="InterPro" id="IPR006062">
    <property type="entry name" value="His_biosynth"/>
</dbReference>
<dbReference type="InterPro" id="IPR006063">
    <property type="entry name" value="HisA_bact_arch"/>
</dbReference>
<dbReference type="InterPro" id="IPR044524">
    <property type="entry name" value="Isoase_HisA-like"/>
</dbReference>
<dbReference type="InterPro" id="IPR023016">
    <property type="entry name" value="Isoase_HisA-like_bact"/>
</dbReference>
<dbReference type="InterPro" id="IPR011060">
    <property type="entry name" value="RibuloseP-bd_barrel"/>
</dbReference>
<dbReference type="NCBIfam" id="TIGR00007">
    <property type="entry name" value="1-(5-phosphoribosyl)-5-[(5-phosphoribosylamino)methylideneamino]imidazole-4-carboxamide isomerase"/>
    <property type="match status" value="1"/>
</dbReference>
<dbReference type="PANTHER" id="PTHR43090">
    <property type="entry name" value="1-(5-PHOSPHORIBOSYL)-5-[(5-PHOSPHORIBOSYLAMINO)METHYLIDENEAMINO] IMIDAZOLE-4-CARBOXAMIDE ISOMERASE"/>
    <property type="match status" value="1"/>
</dbReference>
<dbReference type="PANTHER" id="PTHR43090:SF2">
    <property type="entry name" value="1-(5-PHOSPHORIBOSYL)-5-[(5-PHOSPHORIBOSYLAMINO)METHYLIDENEAMINO] IMIDAZOLE-4-CARBOXAMIDE ISOMERASE"/>
    <property type="match status" value="1"/>
</dbReference>
<dbReference type="Pfam" id="PF00977">
    <property type="entry name" value="His_biosynth"/>
    <property type="match status" value="1"/>
</dbReference>
<dbReference type="SUPFAM" id="SSF51366">
    <property type="entry name" value="Ribulose-phoshate binding barrel"/>
    <property type="match status" value="1"/>
</dbReference>